<feature type="chain" id="PRO_0000288674" description="Probable 6-phosphogluconolactonase 1">
    <location>
        <begin position="1"/>
        <end position="296"/>
    </location>
</feature>
<keyword id="KW-0378">Hydrolase</keyword>
<keyword id="KW-1185">Reference proteome</keyword>
<organism>
    <name type="scientific">Oryza sativa subsp. japonica</name>
    <name type="common">Rice</name>
    <dbReference type="NCBI Taxonomy" id="39947"/>
    <lineage>
        <taxon>Eukaryota</taxon>
        <taxon>Viridiplantae</taxon>
        <taxon>Streptophyta</taxon>
        <taxon>Embryophyta</taxon>
        <taxon>Tracheophyta</taxon>
        <taxon>Spermatophyta</taxon>
        <taxon>Magnoliopsida</taxon>
        <taxon>Liliopsida</taxon>
        <taxon>Poales</taxon>
        <taxon>Poaceae</taxon>
        <taxon>BOP clade</taxon>
        <taxon>Oryzoideae</taxon>
        <taxon>Oryzeae</taxon>
        <taxon>Oryzinae</taxon>
        <taxon>Oryza</taxon>
        <taxon>Oryza sativa</taxon>
    </lineage>
</organism>
<sequence>MLSWNNSWHSSSTENRTMEREIVASYEPKKNNEIRMFESSDEMATDLAEYISQVSEISIKERGYFAIALSGGPLISFMRKLCEAPYNKTLDWSKWYIFWADERAVAKNHVDSYYKSTKEDFLSKVPILNGHVYSINDNVTVEDAATDYEFVIRQLVKIRTVGVSESNDCPKFDLILLSIGSDGHVASLFPNHPALELKDDWVTYITDSPVPPPERITFTLPVINSASNIAVVATGEDKAKAVYFAISDGTEGPDAPSIPARMVQPTDGKLVWFLDKASASFLEAKTKNDGYEHPKY</sequence>
<accession>Q75IV7</accession>
<accession>A3AJ42</accession>
<accession>B7ETZ6</accession>
<gene>
    <name type="ordered locus">Os03g0416500</name>
    <name type="ordered locus">LOC_Os03g30300</name>
    <name type="ORF">OsJ_010814</name>
    <name type="ORF">OSJNBb0059G13.23</name>
</gene>
<dbReference type="EC" id="3.1.1.31"/>
<dbReference type="EMBL" id="AC120538">
    <property type="protein sequence ID" value="AAS07092.1"/>
    <property type="molecule type" value="Genomic_DNA"/>
</dbReference>
<dbReference type="EMBL" id="DP000009">
    <property type="protein sequence ID" value="ABF96623.1"/>
    <property type="molecule type" value="Genomic_DNA"/>
</dbReference>
<dbReference type="EMBL" id="DP000009">
    <property type="protein sequence ID" value="ABF96624.1"/>
    <property type="molecule type" value="Genomic_DNA"/>
</dbReference>
<dbReference type="EMBL" id="AP008209">
    <property type="protein sequence ID" value="BAF12283.1"/>
    <property type="molecule type" value="Genomic_DNA"/>
</dbReference>
<dbReference type="EMBL" id="AP014959">
    <property type="protein sequence ID" value="BAS84708.1"/>
    <property type="molecule type" value="Genomic_DNA"/>
</dbReference>
<dbReference type="EMBL" id="CM000140">
    <property type="protein sequence ID" value="EAZ27331.1"/>
    <property type="status" value="ALT_SEQ"/>
    <property type="molecule type" value="Genomic_DNA"/>
</dbReference>
<dbReference type="EMBL" id="AK103024">
    <property type="protein sequence ID" value="BAG95843.1"/>
    <property type="molecule type" value="mRNA"/>
</dbReference>
<dbReference type="RefSeq" id="XP_015628257.1">
    <property type="nucleotide sequence ID" value="XM_015772771.1"/>
</dbReference>
<dbReference type="SMR" id="Q75IV7"/>
<dbReference type="FunCoup" id="Q75IV7">
    <property type="interactions" value="2200"/>
</dbReference>
<dbReference type="STRING" id="39947.Q75IV7"/>
<dbReference type="PaxDb" id="39947-Q75IV7"/>
<dbReference type="EnsemblPlants" id="Os03t0416500-01">
    <property type="protein sequence ID" value="Os03t0416500-01"/>
    <property type="gene ID" value="Os03g0416500"/>
</dbReference>
<dbReference type="EnsemblPlants" id="Os03t0416500-02">
    <property type="protein sequence ID" value="Os03t0416500-02"/>
    <property type="gene ID" value="Os03g0416500"/>
</dbReference>
<dbReference type="Gramene" id="Os03t0416500-01">
    <property type="protein sequence ID" value="Os03t0416500-01"/>
    <property type="gene ID" value="Os03g0416500"/>
</dbReference>
<dbReference type="Gramene" id="Os03t0416500-02">
    <property type="protein sequence ID" value="Os03t0416500-02"/>
    <property type="gene ID" value="Os03g0416500"/>
</dbReference>
<dbReference type="KEGG" id="dosa:Os03g0416500"/>
<dbReference type="eggNOG" id="KOG3147">
    <property type="taxonomic scope" value="Eukaryota"/>
</dbReference>
<dbReference type="HOGENOM" id="CLU_053947_0_0_1"/>
<dbReference type="InParanoid" id="Q75IV7"/>
<dbReference type="OMA" id="YDKIVDW"/>
<dbReference type="OrthoDB" id="432544at2759"/>
<dbReference type="UniPathway" id="UPA00115">
    <property type="reaction ID" value="UER00409"/>
</dbReference>
<dbReference type="Proteomes" id="UP000000763">
    <property type="component" value="Chromosome 3"/>
</dbReference>
<dbReference type="Proteomes" id="UP000007752">
    <property type="component" value="Chromosome 3"/>
</dbReference>
<dbReference type="Proteomes" id="UP000059680">
    <property type="component" value="Chromosome 3"/>
</dbReference>
<dbReference type="GO" id="GO:0005829">
    <property type="term" value="C:cytosol"/>
    <property type="evidence" value="ECO:0000318"/>
    <property type="project" value="GO_Central"/>
</dbReference>
<dbReference type="GO" id="GO:0017057">
    <property type="term" value="F:6-phosphogluconolactonase activity"/>
    <property type="evidence" value="ECO:0000318"/>
    <property type="project" value="GO_Central"/>
</dbReference>
<dbReference type="GO" id="GO:0005975">
    <property type="term" value="P:carbohydrate metabolic process"/>
    <property type="evidence" value="ECO:0007669"/>
    <property type="project" value="InterPro"/>
</dbReference>
<dbReference type="GO" id="GO:0009051">
    <property type="term" value="P:pentose-phosphate shunt, oxidative branch"/>
    <property type="evidence" value="ECO:0000318"/>
    <property type="project" value="GO_Central"/>
</dbReference>
<dbReference type="CDD" id="cd01400">
    <property type="entry name" value="6PGL"/>
    <property type="match status" value="1"/>
</dbReference>
<dbReference type="FunFam" id="3.40.50.1360:FF:000009">
    <property type="entry name" value="Probable 6-phosphogluconolactonase"/>
    <property type="match status" value="1"/>
</dbReference>
<dbReference type="Gene3D" id="3.40.50.1360">
    <property type="match status" value="1"/>
</dbReference>
<dbReference type="InterPro" id="IPR005900">
    <property type="entry name" value="6-phosphogluconolactonase_DevB"/>
</dbReference>
<dbReference type="InterPro" id="IPR006148">
    <property type="entry name" value="Glc/Gal-6P_isomerase"/>
</dbReference>
<dbReference type="InterPro" id="IPR037171">
    <property type="entry name" value="NagB/RpiA_transferase-like"/>
</dbReference>
<dbReference type="InterPro" id="IPR039104">
    <property type="entry name" value="PGLS"/>
</dbReference>
<dbReference type="NCBIfam" id="TIGR01198">
    <property type="entry name" value="pgl"/>
    <property type="match status" value="1"/>
</dbReference>
<dbReference type="PANTHER" id="PTHR11054">
    <property type="entry name" value="6-PHOSPHOGLUCONOLACTONASE"/>
    <property type="match status" value="1"/>
</dbReference>
<dbReference type="PANTHER" id="PTHR11054:SF17">
    <property type="entry name" value="6-PHOSPHOGLUCONOLACTONASE 1-RELATED"/>
    <property type="match status" value="1"/>
</dbReference>
<dbReference type="Pfam" id="PF01182">
    <property type="entry name" value="Glucosamine_iso"/>
    <property type="match status" value="1"/>
</dbReference>
<dbReference type="SUPFAM" id="SSF100950">
    <property type="entry name" value="NagB/RpiA/CoA transferase-like"/>
    <property type="match status" value="1"/>
</dbReference>
<evidence type="ECO:0000250" key="1"/>
<evidence type="ECO:0000305" key="2"/>
<proteinExistence type="evidence at transcript level"/>
<reference key="1">
    <citation type="journal article" date="2005" name="Genome Res.">
        <title>Sequence, annotation, and analysis of synteny between rice chromosome 3 and diverged grass species.</title>
        <authorList>
            <consortium name="The rice chromosome 3 sequencing consortium"/>
            <person name="Buell C.R."/>
            <person name="Yuan Q."/>
            <person name="Ouyang S."/>
            <person name="Liu J."/>
            <person name="Zhu W."/>
            <person name="Wang A."/>
            <person name="Maiti R."/>
            <person name="Haas B."/>
            <person name="Wortman J."/>
            <person name="Pertea M."/>
            <person name="Jones K.M."/>
            <person name="Kim M."/>
            <person name="Overton L."/>
            <person name="Tsitrin T."/>
            <person name="Fadrosh D."/>
            <person name="Bera J."/>
            <person name="Weaver B."/>
            <person name="Jin S."/>
            <person name="Johri S."/>
            <person name="Reardon M."/>
            <person name="Webb K."/>
            <person name="Hill J."/>
            <person name="Moffat K."/>
            <person name="Tallon L."/>
            <person name="Van Aken S."/>
            <person name="Lewis M."/>
            <person name="Utterback T."/>
            <person name="Feldblyum T."/>
            <person name="Zismann V."/>
            <person name="Iobst S."/>
            <person name="Hsiao J."/>
            <person name="de Vazeille A.R."/>
            <person name="Salzberg S.L."/>
            <person name="White O."/>
            <person name="Fraser C.M."/>
            <person name="Yu Y."/>
            <person name="Kim H."/>
            <person name="Rambo T."/>
            <person name="Currie J."/>
            <person name="Collura K."/>
            <person name="Kernodle-Thompson S."/>
            <person name="Wei F."/>
            <person name="Kudrna K."/>
            <person name="Ammiraju J.S.S."/>
            <person name="Luo M."/>
            <person name="Goicoechea J.L."/>
            <person name="Wing R.A."/>
            <person name="Henry D."/>
            <person name="Oates R."/>
            <person name="Palmer M."/>
            <person name="Pries G."/>
            <person name="Saski C."/>
            <person name="Simmons J."/>
            <person name="Soderlund C."/>
            <person name="Nelson W."/>
            <person name="de la Bastide M."/>
            <person name="Spiegel L."/>
            <person name="Nascimento L."/>
            <person name="Huang E."/>
            <person name="Preston R."/>
            <person name="Zutavern T."/>
            <person name="Palmer L."/>
            <person name="O'Shaughnessy A."/>
            <person name="Dike S."/>
            <person name="McCombie W.R."/>
            <person name="Minx P."/>
            <person name="Cordum H."/>
            <person name="Wilson R."/>
            <person name="Jin W."/>
            <person name="Lee H.R."/>
            <person name="Jiang J."/>
            <person name="Jackson S."/>
        </authorList>
    </citation>
    <scope>NUCLEOTIDE SEQUENCE [LARGE SCALE GENOMIC DNA]</scope>
    <source>
        <strain>cv. Nipponbare</strain>
    </source>
</reference>
<reference key="2">
    <citation type="journal article" date="2005" name="Nature">
        <title>The map-based sequence of the rice genome.</title>
        <authorList>
            <consortium name="International rice genome sequencing project (IRGSP)"/>
        </authorList>
    </citation>
    <scope>NUCLEOTIDE SEQUENCE [LARGE SCALE GENOMIC DNA]</scope>
    <source>
        <strain>cv. Nipponbare</strain>
    </source>
</reference>
<reference key="3">
    <citation type="journal article" date="2008" name="Nucleic Acids Res.">
        <title>The rice annotation project database (RAP-DB): 2008 update.</title>
        <authorList>
            <consortium name="The rice annotation project (RAP)"/>
        </authorList>
    </citation>
    <scope>GENOME REANNOTATION</scope>
    <source>
        <strain>cv. Nipponbare</strain>
    </source>
</reference>
<reference key="4">
    <citation type="journal article" date="2013" name="Rice">
        <title>Improvement of the Oryza sativa Nipponbare reference genome using next generation sequence and optical map data.</title>
        <authorList>
            <person name="Kawahara Y."/>
            <person name="de la Bastide M."/>
            <person name="Hamilton J.P."/>
            <person name="Kanamori H."/>
            <person name="McCombie W.R."/>
            <person name="Ouyang S."/>
            <person name="Schwartz D.C."/>
            <person name="Tanaka T."/>
            <person name="Wu J."/>
            <person name="Zhou S."/>
            <person name="Childs K.L."/>
            <person name="Davidson R.M."/>
            <person name="Lin H."/>
            <person name="Quesada-Ocampo L."/>
            <person name="Vaillancourt B."/>
            <person name="Sakai H."/>
            <person name="Lee S.S."/>
            <person name="Kim J."/>
            <person name="Numa H."/>
            <person name="Itoh T."/>
            <person name="Buell C.R."/>
            <person name="Matsumoto T."/>
        </authorList>
    </citation>
    <scope>GENOME REANNOTATION</scope>
    <source>
        <strain>cv. Nipponbare</strain>
    </source>
</reference>
<reference key="5">
    <citation type="journal article" date="2005" name="PLoS Biol.">
        <title>The genomes of Oryza sativa: a history of duplications.</title>
        <authorList>
            <person name="Yu J."/>
            <person name="Wang J."/>
            <person name="Lin W."/>
            <person name="Li S."/>
            <person name="Li H."/>
            <person name="Zhou J."/>
            <person name="Ni P."/>
            <person name="Dong W."/>
            <person name="Hu S."/>
            <person name="Zeng C."/>
            <person name="Zhang J."/>
            <person name="Zhang Y."/>
            <person name="Li R."/>
            <person name="Xu Z."/>
            <person name="Li S."/>
            <person name="Li X."/>
            <person name="Zheng H."/>
            <person name="Cong L."/>
            <person name="Lin L."/>
            <person name="Yin J."/>
            <person name="Geng J."/>
            <person name="Li G."/>
            <person name="Shi J."/>
            <person name="Liu J."/>
            <person name="Lv H."/>
            <person name="Li J."/>
            <person name="Wang J."/>
            <person name="Deng Y."/>
            <person name="Ran L."/>
            <person name="Shi X."/>
            <person name="Wang X."/>
            <person name="Wu Q."/>
            <person name="Li C."/>
            <person name="Ren X."/>
            <person name="Wang J."/>
            <person name="Wang X."/>
            <person name="Li D."/>
            <person name="Liu D."/>
            <person name="Zhang X."/>
            <person name="Ji Z."/>
            <person name="Zhao W."/>
            <person name="Sun Y."/>
            <person name="Zhang Z."/>
            <person name="Bao J."/>
            <person name="Han Y."/>
            <person name="Dong L."/>
            <person name="Ji J."/>
            <person name="Chen P."/>
            <person name="Wu S."/>
            <person name="Liu J."/>
            <person name="Xiao Y."/>
            <person name="Bu D."/>
            <person name="Tan J."/>
            <person name="Yang L."/>
            <person name="Ye C."/>
            <person name="Zhang J."/>
            <person name="Xu J."/>
            <person name="Zhou Y."/>
            <person name="Yu Y."/>
            <person name="Zhang B."/>
            <person name="Zhuang S."/>
            <person name="Wei H."/>
            <person name="Liu B."/>
            <person name="Lei M."/>
            <person name="Yu H."/>
            <person name="Li Y."/>
            <person name="Xu H."/>
            <person name="Wei S."/>
            <person name="He X."/>
            <person name="Fang L."/>
            <person name="Zhang Z."/>
            <person name="Zhang Y."/>
            <person name="Huang X."/>
            <person name="Su Z."/>
            <person name="Tong W."/>
            <person name="Li J."/>
            <person name="Tong Z."/>
            <person name="Li S."/>
            <person name="Ye J."/>
            <person name="Wang L."/>
            <person name="Fang L."/>
            <person name="Lei T."/>
            <person name="Chen C.-S."/>
            <person name="Chen H.-C."/>
            <person name="Xu Z."/>
            <person name="Li H."/>
            <person name="Huang H."/>
            <person name="Zhang F."/>
            <person name="Xu H."/>
            <person name="Li N."/>
            <person name="Zhao C."/>
            <person name="Li S."/>
            <person name="Dong L."/>
            <person name="Huang Y."/>
            <person name="Li L."/>
            <person name="Xi Y."/>
            <person name="Qi Q."/>
            <person name="Li W."/>
            <person name="Zhang B."/>
            <person name="Hu W."/>
            <person name="Zhang Y."/>
            <person name="Tian X."/>
            <person name="Jiao Y."/>
            <person name="Liang X."/>
            <person name="Jin J."/>
            <person name="Gao L."/>
            <person name="Zheng W."/>
            <person name="Hao B."/>
            <person name="Liu S.-M."/>
            <person name="Wang W."/>
            <person name="Yuan L."/>
            <person name="Cao M."/>
            <person name="McDermott J."/>
            <person name="Samudrala R."/>
            <person name="Wang J."/>
            <person name="Wong G.K.-S."/>
            <person name="Yang H."/>
        </authorList>
    </citation>
    <scope>NUCLEOTIDE SEQUENCE [LARGE SCALE GENOMIC DNA]</scope>
    <source>
        <strain>cv. Nipponbare</strain>
    </source>
</reference>
<reference key="6">
    <citation type="journal article" date="2003" name="Science">
        <title>Collection, mapping, and annotation of over 28,000 cDNA clones from japonica rice.</title>
        <authorList>
            <consortium name="The rice full-length cDNA consortium"/>
        </authorList>
    </citation>
    <scope>NUCLEOTIDE SEQUENCE [LARGE SCALE MRNA]</scope>
    <source>
        <strain>cv. Nipponbare</strain>
    </source>
</reference>
<protein>
    <recommendedName>
        <fullName>Probable 6-phosphogluconolactonase 1</fullName>
        <shortName>6PGL 1</shortName>
        <ecNumber>3.1.1.31</ecNumber>
    </recommendedName>
</protein>
<comment type="function">
    <text evidence="1">Hydrolysis of 6-phosphogluconolactone to 6-phosphogluconate.</text>
</comment>
<comment type="catalytic activity">
    <reaction>
        <text>6-phospho-D-glucono-1,5-lactone + H2O = 6-phospho-D-gluconate + H(+)</text>
        <dbReference type="Rhea" id="RHEA:12556"/>
        <dbReference type="ChEBI" id="CHEBI:15377"/>
        <dbReference type="ChEBI" id="CHEBI:15378"/>
        <dbReference type="ChEBI" id="CHEBI:57955"/>
        <dbReference type="ChEBI" id="CHEBI:58759"/>
        <dbReference type="EC" id="3.1.1.31"/>
    </reaction>
</comment>
<comment type="pathway">
    <text>Carbohydrate degradation; pentose phosphate pathway; D-ribulose 5-phosphate from D-glucose 6-phosphate (oxidative stage): step 2/3.</text>
</comment>
<comment type="similarity">
    <text evidence="2">Belongs to the glucosamine/galactosamine-6-phosphate isomerase family. 6-phosphogluconolactonase subfamily.</text>
</comment>
<comment type="sequence caution" evidence="2">
    <conflict type="erroneous gene model prediction">
        <sequence resource="EMBL-CDS" id="EAZ27331"/>
    </conflict>
</comment>
<name>6PGL1_ORYSJ</name>